<sequence length="363" mass="40507">MNELLLNLVDPLHQWFLGLGDGGVVLWSVLKILLIAVPVIVSVAFYVVWERKLIGWMHVRHGPMYVGMGIFQAFADVFKLLFKEILQPSSSHKAMFIIAPLLTLAPAFAAWSVVPFDAKLVLSNANVGLLYLLAMTSLGVYGIILAGWASNSKYAFLGAMRSAAQVVSYEIAMGFALVGVMIASGSVNLSQIVFAQAGNSGFFDWFLIPLFPLFIVYWVSGVAETNRAPFDVVEGESEIVAGHMVEYSGGAFALFFLAEYANMILVSFLISIFFLGGWLSPIQGWVNADISPWIDWLWKGGWPWLLMKVFFFASAYIWFRASFPRYRYDQIMRLGWKVFIPLTIVWIAVTALMVFYGVIQKGV</sequence>
<protein>
    <recommendedName>
        <fullName evidence="1">NADH-quinone oxidoreductase subunit H</fullName>
        <ecNumber evidence="1">7.1.1.-</ecNumber>
    </recommendedName>
    <alternativeName>
        <fullName evidence="1">NADH dehydrogenase I subunit H</fullName>
    </alternativeName>
    <alternativeName>
        <fullName evidence="1">NDH-1 subunit H</fullName>
    </alternativeName>
</protein>
<gene>
    <name evidence="1" type="primary">nuoH</name>
    <name type="synonym">nqo8</name>
    <name type="ordered locus">XOO3228</name>
</gene>
<name>NUOH_XANOR</name>
<dbReference type="EC" id="7.1.1.-" evidence="1"/>
<dbReference type="EMBL" id="AE013598">
    <property type="protein sequence ID" value="AAW76482.1"/>
    <property type="status" value="ALT_INIT"/>
    <property type="molecule type" value="Genomic_DNA"/>
</dbReference>
<dbReference type="SMR" id="Q5GXT9"/>
<dbReference type="STRING" id="291331.XOO3228"/>
<dbReference type="KEGG" id="xoo:XOO3228"/>
<dbReference type="HOGENOM" id="CLU_015134_0_1_6"/>
<dbReference type="Proteomes" id="UP000006735">
    <property type="component" value="Chromosome"/>
</dbReference>
<dbReference type="GO" id="GO:0005886">
    <property type="term" value="C:plasma membrane"/>
    <property type="evidence" value="ECO:0007669"/>
    <property type="project" value="UniProtKB-SubCell"/>
</dbReference>
<dbReference type="GO" id="GO:0003954">
    <property type="term" value="F:NADH dehydrogenase activity"/>
    <property type="evidence" value="ECO:0007669"/>
    <property type="project" value="TreeGrafter"/>
</dbReference>
<dbReference type="GO" id="GO:0016655">
    <property type="term" value="F:oxidoreductase activity, acting on NAD(P)H, quinone or similar compound as acceptor"/>
    <property type="evidence" value="ECO:0007669"/>
    <property type="project" value="UniProtKB-UniRule"/>
</dbReference>
<dbReference type="GO" id="GO:0048038">
    <property type="term" value="F:quinone binding"/>
    <property type="evidence" value="ECO:0007669"/>
    <property type="project" value="UniProtKB-KW"/>
</dbReference>
<dbReference type="GO" id="GO:0009060">
    <property type="term" value="P:aerobic respiration"/>
    <property type="evidence" value="ECO:0007669"/>
    <property type="project" value="TreeGrafter"/>
</dbReference>
<dbReference type="HAMAP" id="MF_01350">
    <property type="entry name" value="NDH1_NuoH"/>
    <property type="match status" value="1"/>
</dbReference>
<dbReference type="InterPro" id="IPR001694">
    <property type="entry name" value="NADH_UbQ_OxRdtase_su1/FPO"/>
</dbReference>
<dbReference type="InterPro" id="IPR018086">
    <property type="entry name" value="NADH_UbQ_OxRdtase_su1_CS"/>
</dbReference>
<dbReference type="NCBIfam" id="NF004741">
    <property type="entry name" value="PRK06076.1-2"/>
    <property type="match status" value="1"/>
</dbReference>
<dbReference type="NCBIfam" id="NF004742">
    <property type="entry name" value="PRK06076.1-3"/>
    <property type="match status" value="1"/>
</dbReference>
<dbReference type="PANTHER" id="PTHR11432">
    <property type="entry name" value="NADH DEHYDROGENASE SUBUNIT 1"/>
    <property type="match status" value="1"/>
</dbReference>
<dbReference type="PANTHER" id="PTHR11432:SF3">
    <property type="entry name" value="NADH-UBIQUINONE OXIDOREDUCTASE CHAIN 1"/>
    <property type="match status" value="1"/>
</dbReference>
<dbReference type="Pfam" id="PF00146">
    <property type="entry name" value="NADHdh"/>
    <property type="match status" value="1"/>
</dbReference>
<dbReference type="PROSITE" id="PS00668">
    <property type="entry name" value="COMPLEX1_ND1_2"/>
    <property type="match status" value="1"/>
</dbReference>
<comment type="function">
    <text evidence="1">NDH-1 shuttles electrons from NADH, via FMN and iron-sulfur (Fe-S) centers, to quinones in the respiratory chain. The immediate electron acceptor for the enzyme in this species is believed to be ubiquinone. Couples the redox reaction to proton translocation (for every two electrons transferred, four hydrogen ions are translocated across the cytoplasmic membrane), and thus conserves the redox energy in a proton gradient. This subunit may bind ubiquinone.</text>
</comment>
<comment type="catalytic activity">
    <reaction evidence="1">
        <text>a quinone + NADH + 5 H(+)(in) = a quinol + NAD(+) + 4 H(+)(out)</text>
        <dbReference type="Rhea" id="RHEA:57888"/>
        <dbReference type="ChEBI" id="CHEBI:15378"/>
        <dbReference type="ChEBI" id="CHEBI:24646"/>
        <dbReference type="ChEBI" id="CHEBI:57540"/>
        <dbReference type="ChEBI" id="CHEBI:57945"/>
        <dbReference type="ChEBI" id="CHEBI:132124"/>
    </reaction>
</comment>
<comment type="subunit">
    <text evidence="1">NDH-1 is composed of 14 different subunits. Subunits NuoA, H, J, K, L, M, N constitute the membrane sector of the complex.</text>
</comment>
<comment type="subcellular location">
    <subcellularLocation>
        <location evidence="1">Cell inner membrane</location>
        <topology evidence="1">Multi-pass membrane protein</topology>
    </subcellularLocation>
</comment>
<comment type="similarity">
    <text evidence="1">Belongs to the complex I subunit 1 family.</text>
</comment>
<comment type="sequence caution" evidence="2">
    <conflict type="erroneous initiation">
        <sequence resource="EMBL-CDS" id="AAW76482"/>
    </conflict>
</comment>
<proteinExistence type="inferred from homology"/>
<keyword id="KW-0997">Cell inner membrane</keyword>
<keyword id="KW-1003">Cell membrane</keyword>
<keyword id="KW-0472">Membrane</keyword>
<keyword id="KW-0520">NAD</keyword>
<keyword id="KW-0874">Quinone</keyword>
<keyword id="KW-1185">Reference proteome</keyword>
<keyword id="KW-1278">Translocase</keyword>
<keyword id="KW-0812">Transmembrane</keyword>
<keyword id="KW-1133">Transmembrane helix</keyword>
<keyword id="KW-0830">Ubiquinone</keyword>
<accession>Q5GXT9</accession>
<feature type="chain" id="PRO_0000244964" description="NADH-quinone oxidoreductase subunit H">
    <location>
        <begin position="1"/>
        <end position="363"/>
    </location>
</feature>
<feature type="transmembrane region" description="Helical" evidence="1">
    <location>
        <begin position="29"/>
        <end position="49"/>
    </location>
</feature>
<feature type="transmembrane region" description="Helical" evidence="1">
    <location>
        <begin position="62"/>
        <end position="82"/>
    </location>
</feature>
<feature type="transmembrane region" description="Helical" evidence="1">
    <location>
        <begin position="96"/>
        <end position="116"/>
    </location>
</feature>
<feature type="transmembrane region" description="Helical" evidence="1">
    <location>
        <begin position="127"/>
        <end position="147"/>
    </location>
</feature>
<feature type="transmembrane region" description="Helical" evidence="1">
    <location>
        <begin position="163"/>
        <end position="183"/>
    </location>
</feature>
<feature type="transmembrane region" description="Helical" evidence="1">
    <location>
        <begin position="202"/>
        <end position="222"/>
    </location>
</feature>
<feature type="transmembrane region" description="Helical" evidence="1">
    <location>
        <begin position="238"/>
        <end position="257"/>
    </location>
</feature>
<feature type="transmembrane region" description="Helical" evidence="1">
    <location>
        <begin position="264"/>
        <end position="286"/>
    </location>
</feature>
<feature type="transmembrane region" description="Helical" evidence="1">
    <location>
        <begin position="299"/>
        <end position="319"/>
    </location>
</feature>
<feature type="transmembrane region" description="Helical" evidence="1">
    <location>
        <begin position="339"/>
        <end position="359"/>
    </location>
</feature>
<organism>
    <name type="scientific">Xanthomonas oryzae pv. oryzae (strain KACC10331 / KXO85)</name>
    <dbReference type="NCBI Taxonomy" id="291331"/>
    <lineage>
        <taxon>Bacteria</taxon>
        <taxon>Pseudomonadati</taxon>
        <taxon>Pseudomonadota</taxon>
        <taxon>Gammaproteobacteria</taxon>
        <taxon>Lysobacterales</taxon>
        <taxon>Lysobacteraceae</taxon>
        <taxon>Xanthomonas</taxon>
    </lineage>
</organism>
<reference key="1">
    <citation type="journal article" date="2005" name="Nucleic Acids Res.">
        <title>The genome sequence of Xanthomonas oryzae pathovar oryzae KACC10331, the bacterial blight pathogen of rice.</title>
        <authorList>
            <person name="Lee B.-M."/>
            <person name="Park Y.-J."/>
            <person name="Park D.-S."/>
            <person name="Kang H.-W."/>
            <person name="Kim J.-G."/>
            <person name="Song E.-S."/>
            <person name="Park I.-C."/>
            <person name="Yoon U.-H."/>
            <person name="Hahn J.-H."/>
            <person name="Koo B.-S."/>
            <person name="Lee G.-B."/>
            <person name="Kim H."/>
            <person name="Park H.-S."/>
            <person name="Yoon K.-O."/>
            <person name="Kim J.-H."/>
            <person name="Jung C.-H."/>
            <person name="Koh N.-H."/>
            <person name="Seo J.-S."/>
            <person name="Go S.-J."/>
        </authorList>
    </citation>
    <scope>NUCLEOTIDE SEQUENCE [LARGE SCALE GENOMIC DNA]</scope>
    <source>
        <strain>KACC10331 / KXO85</strain>
    </source>
</reference>
<evidence type="ECO:0000255" key="1">
    <source>
        <dbReference type="HAMAP-Rule" id="MF_01350"/>
    </source>
</evidence>
<evidence type="ECO:0000305" key="2"/>